<sequence length="427" mass="48518">MGSVRTNRYSIVSSEEDGMKLATMAVANGFGNGKSKVHTRQQCRSRFVKKDGHCNVQFINVGEKGQRYLADIFTTCVDIRWRWMLVIFCLTFILSWLFFGCVFWLIALLHGDLENQENNKPCVSQVSSFTAAFLFSIETQTTIGYGFRCVTDECPIAVFMVVFQSIVGCIIDAFIIGAVMAKMAKPKKRNETLVFSHNAVVAMRDGKLCLMWRVGNLRKSHLVEAHVRAQLLKSRITSEGEYIPLDEIDINVGFDSGIDRIFLVSPITIVHEIDEDSPLYDLSKQDMDNADFEIVVILEGMVEATAMTTQCRSSYLANEILWGHRYEPVLFEEKNYYKVDYSRFHKTYEVPNTPICSARDLAEKKYILSNANSFCYENEVALTSKEEDEIDTGVPESTSTDTHPDMDHHNQAGVPLEPRPLRRESEI</sequence>
<keyword id="KW-1003">Cell membrane</keyword>
<keyword id="KW-0407">Ion channel</keyword>
<keyword id="KW-0406">Ion transport</keyword>
<keyword id="KW-0472">Membrane</keyword>
<keyword id="KW-0630">Potassium</keyword>
<keyword id="KW-0633">Potassium transport</keyword>
<keyword id="KW-1185">Reference proteome</keyword>
<keyword id="KW-0812">Transmembrane</keyword>
<keyword id="KW-1133">Transmembrane helix</keyword>
<keyword id="KW-0813">Transport</keyword>
<keyword id="KW-0851">Voltage-gated channel</keyword>
<gene>
    <name type="primary">KCNJ2</name>
    <name type="synonym">IRK1</name>
</gene>
<name>KCNJ2_CHICK</name>
<dbReference type="EMBL" id="U20216">
    <property type="protein sequence ID" value="AAA87175.1"/>
    <property type="molecule type" value="mRNA"/>
</dbReference>
<dbReference type="EMBL" id="AF021141">
    <property type="protein sequence ID" value="AAB88799.1"/>
    <property type="molecule type" value="mRNA"/>
</dbReference>
<dbReference type="PIR" id="A57154">
    <property type="entry name" value="A57154"/>
</dbReference>
<dbReference type="RefSeq" id="NP_990701.1">
    <property type="nucleotide sequence ID" value="NM_205370.1"/>
</dbReference>
<dbReference type="SMR" id="P52186"/>
<dbReference type="FunCoup" id="P52186">
    <property type="interactions" value="11"/>
</dbReference>
<dbReference type="STRING" id="9031.ENSGALP00000006967"/>
<dbReference type="PaxDb" id="9031-ENSGALP00000006967"/>
<dbReference type="Ensembl" id="ENSGALT00000006978">
    <property type="protein sequence ID" value="ENSGALP00000006967"/>
    <property type="gene ID" value="ENSGALG00000004376"/>
</dbReference>
<dbReference type="Ensembl" id="ENSGALT00000109722">
    <property type="protein sequence ID" value="ENSGALP00000093440"/>
    <property type="gene ID" value="ENSGALG00000004376"/>
</dbReference>
<dbReference type="Ensembl" id="ENSGALT00000151689">
    <property type="protein sequence ID" value="ENSGALP00000091681"/>
    <property type="gene ID" value="ENSGALG00000004376"/>
</dbReference>
<dbReference type="Ensembl" id="ENSGALT00015063170">
    <property type="protein sequence ID" value="ENSGALP00015038343"/>
    <property type="gene ID" value="ENSGALG00015025933"/>
</dbReference>
<dbReference type="Ensembl" id="ENSGALT00015063171">
    <property type="protein sequence ID" value="ENSGALP00015038344"/>
    <property type="gene ID" value="ENSGALG00015025933"/>
</dbReference>
<dbReference type="Ensembl" id="ENSGALT00015063172">
    <property type="protein sequence ID" value="ENSGALP00015038345"/>
    <property type="gene ID" value="ENSGALG00015025933"/>
</dbReference>
<dbReference type="GeneID" id="396328"/>
<dbReference type="KEGG" id="gga:396328"/>
<dbReference type="CTD" id="3759"/>
<dbReference type="VEuPathDB" id="HostDB:geneid_396328"/>
<dbReference type="eggNOG" id="KOG3827">
    <property type="taxonomic scope" value="Eukaryota"/>
</dbReference>
<dbReference type="HOGENOM" id="CLU_022738_3_0_1"/>
<dbReference type="InParanoid" id="P52186"/>
<dbReference type="OrthoDB" id="273257at2759"/>
<dbReference type="PhylomeDB" id="P52186"/>
<dbReference type="TreeFam" id="TF313676"/>
<dbReference type="Reactome" id="R-GGA-1296041">
    <property type="pathway name" value="Activation of G protein gated Potassium channels"/>
</dbReference>
<dbReference type="Reactome" id="R-GGA-1296053">
    <property type="pathway name" value="Classical Kir channels"/>
</dbReference>
<dbReference type="Reactome" id="R-GGA-5576886">
    <property type="pathway name" value="Phase 4 - resting membrane potential"/>
</dbReference>
<dbReference type="Reactome" id="R-GGA-997272">
    <property type="pathway name" value="Inhibition of voltage gated Ca2+ channels via Gbeta/gamma subunits"/>
</dbReference>
<dbReference type="PRO" id="PR:P52186"/>
<dbReference type="Proteomes" id="UP000000539">
    <property type="component" value="Unassembled WGS sequence"/>
</dbReference>
<dbReference type="Bgee" id="ENSGALG00000004376">
    <property type="expression patterns" value="Expressed in skeletal muscle tissue and 8 other cell types or tissues"/>
</dbReference>
<dbReference type="GO" id="GO:0016020">
    <property type="term" value="C:membrane"/>
    <property type="evidence" value="ECO:0000250"/>
    <property type="project" value="UniProtKB"/>
</dbReference>
<dbReference type="GO" id="GO:0034702">
    <property type="term" value="C:monoatomic ion channel complex"/>
    <property type="evidence" value="ECO:0007669"/>
    <property type="project" value="UniProtKB-KW"/>
</dbReference>
<dbReference type="GO" id="GO:0005886">
    <property type="term" value="C:plasma membrane"/>
    <property type="evidence" value="ECO:0000318"/>
    <property type="project" value="GO_Central"/>
</dbReference>
<dbReference type="GO" id="GO:0030315">
    <property type="term" value="C:T-tubule"/>
    <property type="evidence" value="ECO:0007669"/>
    <property type="project" value="UniProtKB-SubCell"/>
</dbReference>
<dbReference type="GO" id="GO:0005242">
    <property type="term" value="F:inward rectifier potassium channel activity"/>
    <property type="evidence" value="ECO:0000314"/>
    <property type="project" value="UniProtKB"/>
</dbReference>
<dbReference type="GO" id="GO:0005546">
    <property type="term" value="F:phosphatidylinositol-4,5-bisphosphate binding"/>
    <property type="evidence" value="ECO:0000250"/>
    <property type="project" value="UniProtKB"/>
</dbReference>
<dbReference type="GO" id="GO:1990573">
    <property type="term" value="P:potassium ion import across plasma membrane"/>
    <property type="evidence" value="ECO:0000318"/>
    <property type="project" value="GO_Central"/>
</dbReference>
<dbReference type="GO" id="GO:0006813">
    <property type="term" value="P:potassium ion transport"/>
    <property type="evidence" value="ECO:0000250"/>
    <property type="project" value="UniProtKB"/>
</dbReference>
<dbReference type="GO" id="GO:0051289">
    <property type="term" value="P:protein homotetramerization"/>
    <property type="evidence" value="ECO:0000250"/>
    <property type="project" value="UniProtKB"/>
</dbReference>
<dbReference type="GO" id="GO:0034765">
    <property type="term" value="P:regulation of monoatomic ion transmembrane transport"/>
    <property type="evidence" value="ECO:0000318"/>
    <property type="project" value="GO_Central"/>
</dbReference>
<dbReference type="FunFam" id="1.10.287.70:FF:000039">
    <property type="entry name" value="ATP-sensitive inward rectifier potassium channel 12"/>
    <property type="match status" value="1"/>
</dbReference>
<dbReference type="FunFam" id="2.60.40.1400:FF:000001">
    <property type="entry name" value="G protein-activated inward rectifier potassium channel 2"/>
    <property type="match status" value="1"/>
</dbReference>
<dbReference type="Gene3D" id="1.10.287.70">
    <property type="match status" value="1"/>
</dbReference>
<dbReference type="Gene3D" id="2.60.40.1400">
    <property type="entry name" value="G protein-activated inward rectifier potassium channel 1"/>
    <property type="match status" value="1"/>
</dbReference>
<dbReference type="InterPro" id="IPR014756">
    <property type="entry name" value="Ig_E-set"/>
</dbReference>
<dbReference type="InterPro" id="IPR041647">
    <property type="entry name" value="IRK_C"/>
</dbReference>
<dbReference type="InterPro" id="IPR016449">
    <property type="entry name" value="K_chnl_inward-rec_Kir"/>
</dbReference>
<dbReference type="InterPro" id="IPR003271">
    <property type="entry name" value="K_chnl_inward-rec_Kir2.1"/>
</dbReference>
<dbReference type="InterPro" id="IPR013518">
    <property type="entry name" value="K_chnl_inward-rec_Kir_cyto"/>
</dbReference>
<dbReference type="InterPro" id="IPR013673">
    <property type="entry name" value="K_chnl_inward-rec_Kir_N"/>
</dbReference>
<dbReference type="InterPro" id="IPR040445">
    <property type="entry name" value="Kir_TM"/>
</dbReference>
<dbReference type="PANTHER" id="PTHR11767">
    <property type="entry name" value="INWARD RECTIFIER POTASSIUM CHANNEL"/>
    <property type="match status" value="1"/>
</dbReference>
<dbReference type="PANTHER" id="PTHR11767:SF43">
    <property type="entry name" value="INWARD RECTIFIER POTASSIUM CHANNEL 2"/>
    <property type="match status" value="1"/>
</dbReference>
<dbReference type="Pfam" id="PF01007">
    <property type="entry name" value="IRK"/>
    <property type="match status" value="1"/>
</dbReference>
<dbReference type="Pfam" id="PF17655">
    <property type="entry name" value="IRK_C"/>
    <property type="match status" value="1"/>
</dbReference>
<dbReference type="Pfam" id="PF08466">
    <property type="entry name" value="IRK_N"/>
    <property type="match status" value="1"/>
</dbReference>
<dbReference type="PIRSF" id="PIRSF005465">
    <property type="entry name" value="GIRK_kir"/>
    <property type="match status" value="1"/>
</dbReference>
<dbReference type="PRINTS" id="PR01324">
    <property type="entry name" value="KIR21CHANNEL"/>
</dbReference>
<dbReference type="PRINTS" id="PR01320">
    <property type="entry name" value="KIRCHANNEL"/>
</dbReference>
<dbReference type="SUPFAM" id="SSF81296">
    <property type="entry name" value="E set domains"/>
    <property type="match status" value="1"/>
</dbReference>
<dbReference type="SUPFAM" id="SSF81324">
    <property type="entry name" value="Voltage-gated potassium channels"/>
    <property type="match status" value="1"/>
</dbReference>
<reference key="1">
    <citation type="journal article" date="1995" name="J. Biol. Chem.">
        <title>Permeation properties and differential expression across the auditory receptor epithelium of an inward rectifier K+ channel cloned from the chick inner ear.</title>
        <authorList>
            <person name="Navaratnam D."/>
            <person name="Escobar L."/>
            <person name="Covarrubias M."/>
            <person name="Oberholtzer J.C."/>
        </authorList>
    </citation>
    <scope>NUCLEOTIDE SEQUENCE [MRNA]</scope>
    <scope>FUNCTION</scope>
    <scope>TRANSPORTER ACTIVITY</scope>
    <source>
        <strain>White leghorn</strain>
        <tissue>Inner ear</tissue>
    </source>
</reference>
<reference key="2">
    <citation type="journal article" date="1998" name="Exp. Eye Res.">
        <title>Inwardly rectifying potassium channels in lens epithelium are from the IRK1 (Kir 2.1) family.</title>
        <authorList>
            <person name="Rae J.L."/>
            <person name="Shepard A.R."/>
        </authorList>
    </citation>
    <scope>NUCLEOTIDE SEQUENCE [MRNA]</scope>
    <scope>FUNCTION</scope>
    <scope>TRANSPORTER ACTIVITY</scope>
    <source>
        <strain>White leghorn</strain>
        <tissue>Lens epithelium</tissue>
    </source>
</reference>
<feature type="chain" id="PRO_0000154929" description="Inward rectifier potassium channel 2">
    <location>
        <begin position="1"/>
        <end position="427"/>
    </location>
</feature>
<feature type="topological domain" description="Cytoplasmic" evidence="1">
    <location>
        <begin position="1"/>
        <end position="81"/>
    </location>
</feature>
<feature type="transmembrane region" description="Helical; Name=M1" evidence="1">
    <location>
        <begin position="82"/>
        <end position="106"/>
    </location>
</feature>
<feature type="topological domain" description="Extracellular" evidence="1">
    <location>
        <begin position="107"/>
        <end position="128"/>
    </location>
</feature>
<feature type="intramembrane region" description="Helical; Pore-forming; Name=H5" evidence="1">
    <location>
        <begin position="129"/>
        <end position="140"/>
    </location>
</feature>
<feature type="intramembrane region" description="Pore-forming" evidence="1">
    <location>
        <begin position="141"/>
        <end position="147"/>
    </location>
</feature>
<feature type="topological domain" description="Extracellular" evidence="1">
    <location>
        <begin position="148"/>
        <end position="156"/>
    </location>
</feature>
<feature type="transmembrane region" description="Helical; Name=M2" evidence="1">
    <location>
        <begin position="157"/>
        <end position="178"/>
    </location>
</feature>
<feature type="topological domain" description="Cytoplasmic" evidence="1">
    <location>
        <begin position="179"/>
        <end position="427"/>
    </location>
</feature>
<feature type="region of interest" description="Polyphosphoinositide (PIP2)-binding" evidence="4">
    <location>
        <begin position="181"/>
        <end position="208"/>
    </location>
</feature>
<feature type="region of interest" description="Disordered" evidence="6">
    <location>
        <begin position="386"/>
        <end position="427"/>
    </location>
</feature>
<feature type="short sequence motif" description="Selectivity filter" evidence="1">
    <location>
        <begin position="142"/>
        <end position="147"/>
    </location>
</feature>
<feature type="short sequence motif" description="PDZ-binding" evidence="5">
    <location>
        <begin position="425"/>
        <end position="427"/>
    </location>
</feature>
<feature type="site" description="Role in the control of polyamine-mediated channel gating and in the blocking by intracellular magnesium" evidence="1">
    <location>
        <position position="172"/>
    </location>
</feature>
<feature type="sequence conflict" description="In Ref. 2; AAB88799." evidence="9" ref="2">
    <original>E</original>
    <variation>Q</variation>
    <location>
        <position position="247"/>
    </location>
</feature>
<comment type="function">
    <text evidence="3 7 8">Inward rectifier potassium channels are characterized by a greater tendency to allow potassium to flow into the cell rather than out of it. Their voltage dependence is regulated by the concentration of extracellular potassium; as external potassium is raised, the voltage range of the channel opening shifts to more positive voltages. The inward rectification is mainly due to the blockage of outward current by internal magnesium (PubMed:7642595, PubMed:9533862). Can be blocked by external barium (PubMed:7642595). Probably participates in establishing action potential waveform and excitability of neuronal and muscle tissues (By similarity).</text>
</comment>
<comment type="catalytic activity">
    <reaction evidence="7 8">
        <text>K(+)(in) = K(+)(out)</text>
        <dbReference type="Rhea" id="RHEA:29463"/>
        <dbReference type="ChEBI" id="CHEBI:29103"/>
    </reaction>
</comment>
<comment type="activity regulation">
    <text evidence="4">Activated by phosphatidylinositol 4,5 biphosphate (PtdIns(4,5)P2).</text>
</comment>
<comment type="subunit">
    <text evidence="3">Homotetramer. Homomultimeric and heteromultimeric association with KCNJ4/Kir2.3, resulting in an enhanced G-protein-induced current. Associates, via its PDZ-recognition domain, with a complex containing LIN7A, LIN7B, LIN7C, DLG1, CASK and APBA1.</text>
</comment>
<comment type="subcellular location">
    <subcellularLocation>
        <location evidence="2">Cell membrane</location>
        <topology evidence="5">Multi-pass membrane protein</topology>
    </subcellularLocation>
    <subcellularLocation>
        <location evidence="4">Cell membrane</location>
        <location evidence="4">Sarcolemma</location>
        <location evidence="4">T-tubule</location>
    </subcellularLocation>
</comment>
<comment type="tissue specificity">
    <text>Found in the apical basilar papilla of the inner ear, brain, muscle, cerebellum, heart and liver.</text>
</comment>
<comment type="similarity">
    <text evidence="9">Belongs to the inward rectifier-type potassium channel (TC 1.A.2.1) family. KCNJ2 subfamily.</text>
</comment>
<organism>
    <name type="scientific">Gallus gallus</name>
    <name type="common">Chicken</name>
    <dbReference type="NCBI Taxonomy" id="9031"/>
    <lineage>
        <taxon>Eukaryota</taxon>
        <taxon>Metazoa</taxon>
        <taxon>Chordata</taxon>
        <taxon>Craniata</taxon>
        <taxon>Vertebrata</taxon>
        <taxon>Euteleostomi</taxon>
        <taxon>Archelosauria</taxon>
        <taxon>Archosauria</taxon>
        <taxon>Dinosauria</taxon>
        <taxon>Saurischia</taxon>
        <taxon>Theropoda</taxon>
        <taxon>Coelurosauria</taxon>
        <taxon>Aves</taxon>
        <taxon>Neognathae</taxon>
        <taxon>Galloanserae</taxon>
        <taxon>Galliformes</taxon>
        <taxon>Phasianidae</taxon>
        <taxon>Phasianinae</taxon>
        <taxon>Gallus</taxon>
    </lineage>
</organism>
<evidence type="ECO:0000250" key="1"/>
<evidence type="ECO:0000250" key="2">
    <source>
        <dbReference type="UniProtKB" id="O19182"/>
    </source>
</evidence>
<evidence type="ECO:0000250" key="3">
    <source>
        <dbReference type="UniProtKB" id="P63252"/>
    </source>
</evidence>
<evidence type="ECO:0000250" key="4">
    <source>
        <dbReference type="UniProtKB" id="Q64273"/>
    </source>
</evidence>
<evidence type="ECO:0000255" key="5"/>
<evidence type="ECO:0000256" key="6">
    <source>
        <dbReference type="SAM" id="MobiDB-lite"/>
    </source>
</evidence>
<evidence type="ECO:0000269" key="7">
    <source>
    </source>
</evidence>
<evidence type="ECO:0000269" key="8">
    <source>
    </source>
</evidence>
<evidence type="ECO:0000305" key="9"/>
<accession>P52186</accession>
<accession>O42229</accession>
<proteinExistence type="evidence at transcript level"/>
<protein>
    <recommendedName>
        <fullName>Inward rectifier potassium channel 2</fullName>
    </recommendedName>
    <alternativeName>
        <fullName>Inward rectifier K(+) channel Kir2.1</fullName>
        <shortName>IRK-1</shortName>
    </alternativeName>
    <alternativeName>
        <fullName>Potassium channel, inwardly rectifying subfamily J member 2</fullName>
    </alternativeName>
</protein>